<organism>
    <name type="scientific">Thioalkalivibrio sulfidiphilus (strain HL-EbGR7)</name>
    <dbReference type="NCBI Taxonomy" id="396588"/>
    <lineage>
        <taxon>Bacteria</taxon>
        <taxon>Pseudomonadati</taxon>
        <taxon>Pseudomonadota</taxon>
        <taxon>Gammaproteobacteria</taxon>
        <taxon>Chromatiales</taxon>
        <taxon>Ectothiorhodospiraceae</taxon>
        <taxon>Thioalkalivibrio</taxon>
    </lineage>
</organism>
<comment type="function">
    <text evidence="1">Produces ATP from ADP in the presence of a proton gradient across the membrane.</text>
</comment>
<comment type="subunit">
    <text evidence="1">F-type ATPases have 2 components, CF(1) - the catalytic core - and CF(0) - the membrane proton channel. CF(1) has five subunits: alpha(3), beta(3), gamma(1), delta(1), epsilon(1). CF(0) has three main subunits: a, b and c.</text>
</comment>
<comment type="subcellular location">
    <subcellularLocation>
        <location evidence="1">Cell inner membrane</location>
        <topology evidence="1">Peripheral membrane protein</topology>
    </subcellularLocation>
</comment>
<comment type="similarity">
    <text evidence="1">Belongs to the ATPase epsilon chain family.</text>
</comment>
<gene>
    <name evidence="1" type="primary">atpC</name>
    <name type="ordered locus">Tgr7_3304</name>
</gene>
<keyword id="KW-0066">ATP synthesis</keyword>
<keyword id="KW-0997">Cell inner membrane</keyword>
<keyword id="KW-1003">Cell membrane</keyword>
<keyword id="KW-0139">CF(1)</keyword>
<keyword id="KW-0375">Hydrogen ion transport</keyword>
<keyword id="KW-0406">Ion transport</keyword>
<keyword id="KW-0472">Membrane</keyword>
<keyword id="KW-1185">Reference proteome</keyword>
<keyword id="KW-0813">Transport</keyword>
<proteinExistence type="inferred from homology"/>
<feature type="chain" id="PRO_1000146355" description="ATP synthase epsilon chain">
    <location>
        <begin position="1"/>
        <end position="141"/>
    </location>
</feature>
<protein>
    <recommendedName>
        <fullName evidence="1">ATP synthase epsilon chain</fullName>
    </recommendedName>
    <alternativeName>
        <fullName evidence="1">ATP synthase F1 sector epsilon subunit</fullName>
    </alternativeName>
    <alternativeName>
        <fullName evidence="1">F-ATPase epsilon subunit</fullName>
    </alternativeName>
</protein>
<evidence type="ECO:0000255" key="1">
    <source>
        <dbReference type="HAMAP-Rule" id="MF_00530"/>
    </source>
</evidence>
<sequence>MAMTFHVDIVSAEESIYSGTAQMVVAPAEGGEVGILPRHSQYIAQLKPGEVRVKVSDSGEEHSIFISGGLLEVQPHVVTVLADTAVRAKDLDEAEAKEAMRRAEEALSDRKADFDYAKAQAELIEAAARLRMIEKLRRHTR</sequence>
<accession>B8GRB7</accession>
<dbReference type="EMBL" id="CP001339">
    <property type="protein sequence ID" value="ACL74371.1"/>
    <property type="molecule type" value="Genomic_DNA"/>
</dbReference>
<dbReference type="RefSeq" id="WP_012639833.1">
    <property type="nucleotide sequence ID" value="NC_011901.1"/>
</dbReference>
<dbReference type="SMR" id="B8GRB7"/>
<dbReference type="STRING" id="396588.Tgr7_3304"/>
<dbReference type="KEGG" id="tgr:Tgr7_3304"/>
<dbReference type="eggNOG" id="COG0355">
    <property type="taxonomic scope" value="Bacteria"/>
</dbReference>
<dbReference type="HOGENOM" id="CLU_084338_2_0_6"/>
<dbReference type="OrthoDB" id="9791445at2"/>
<dbReference type="Proteomes" id="UP000002383">
    <property type="component" value="Chromosome"/>
</dbReference>
<dbReference type="GO" id="GO:0005886">
    <property type="term" value="C:plasma membrane"/>
    <property type="evidence" value="ECO:0007669"/>
    <property type="project" value="UniProtKB-SubCell"/>
</dbReference>
<dbReference type="GO" id="GO:0045259">
    <property type="term" value="C:proton-transporting ATP synthase complex"/>
    <property type="evidence" value="ECO:0007669"/>
    <property type="project" value="UniProtKB-KW"/>
</dbReference>
<dbReference type="GO" id="GO:0005524">
    <property type="term" value="F:ATP binding"/>
    <property type="evidence" value="ECO:0007669"/>
    <property type="project" value="UniProtKB-UniRule"/>
</dbReference>
<dbReference type="GO" id="GO:0046933">
    <property type="term" value="F:proton-transporting ATP synthase activity, rotational mechanism"/>
    <property type="evidence" value="ECO:0007669"/>
    <property type="project" value="UniProtKB-UniRule"/>
</dbReference>
<dbReference type="CDD" id="cd12152">
    <property type="entry name" value="F1-ATPase_delta"/>
    <property type="match status" value="1"/>
</dbReference>
<dbReference type="FunFam" id="2.60.15.10:FF:000001">
    <property type="entry name" value="ATP synthase epsilon chain"/>
    <property type="match status" value="1"/>
</dbReference>
<dbReference type="Gene3D" id="1.20.5.440">
    <property type="entry name" value="ATP synthase delta/epsilon subunit, C-terminal domain"/>
    <property type="match status" value="1"/>
</dbReference>
<dbReference type="Gene3D" id="2.60.15.10">
    <property type="entry name" value="F0F1 ATP synthase delta/epsilon subunit, N-terminal"/>
    <property type="match status" value="1"/>
</dbReference>
<dbReference type="HAMAP" id="MF_00530">
    <property type="entry name" value="ATP_synth_epsil_bac"/>
    <property type="match status" value="1"/>
</dbReference>
<dbReference type="InterPro" id="IPR036794">
    <property type="entry name" value="ATP_F1_dsu/esu_C_sf"/>
</dbReference>
<dbReference type="InterPro" id="IPR001469">
    <property type="entry name" value="ATP_synth_F1_dsu/esu"/>
</dbReference>
<dbReference type="InterPro" id="IPR020546">
    <property type="entry name" value="ATP_synth_F1_dsu/esu_N"/>
</dbReference>
<dbReference type="InterPro" id="IPR020547">
    <property type="entry name" value="ATP_synth_F1_esu_C"/>
</dbReference>
<dbReference type="InterPro" id="IPR036771">
    <property type="entry name" value="ATPsynth_dsu/esu_N"/>
</dbReference>
<dbReference type="NCBIfam" id="TIGR01216">
    <property type="entry name" value="ATP_synt_epsi"/>
    <property type="match status" value="1"/>
</dbReference>
<dbReference type="NCBIfam" id="NF001847">
    <property type="entry name" value="PRK00571.1-4"/>
    <property type="match status" value="1"/>
</dbReference>
<dbReference type="PANTHER" id="PTHR13822">
    <property type="entry name" value="ATP SYNTHASE DELTA/EPSILON CHAIN"/>
    <property type="match status" value="1"/>
</dbReference>
<dbReference type="PANTHER" id="PTHR13822:SF10">
    <property type="entry name" value="ATP SYNTHASE EPSILON CHAIN, CHLOROPLASTIC"/>
    <property type="match status" value="1"/>
</dbReference>
<dbReference type="Pfam" id="PF00401">
    <property type="entry name" value="ATP-synt_DE"/>
    <property type="match status" value="1"/>
</dbReference>
<dbReference type="Pfam" id="PF02823">
    <property type="entry name" value="ATP-synt_DE_N"/>
    <property type="match status" value="1"/>
</dbReference>
<dbReference type="SUPFAM" id="SSF46604">
    <property type="entry name" value="Epsilon subunit of F1F0-ATP synthase C-terminal domain"/>
    <property type="match status" value="1"/>
</dbReference>
<dbReference type="SUPFAM" id="SSF51344">
    <property type="entry name" value="Epsilon subunit of F1F0-ATP synthase N-terminal domain"/>
    <property type="match status" value="1"/>
</dbReference>
<name>ATPE_THISH</name>
<reference key="1">
    <citation type="journal article" date="2011" name="Stand. Genomic Sci.">
        <title>Complete genome sequence of 'Thioalkalivibrio sulfidophilus' HL-EbGr7.</title>
        <authorList>
            <person name="Muyzer G."/>
            <person name="Sorokin D.Y."/>
            <person name="Mavromatis K."/>
            <person name="Lapidus A."/>
            <person name="Clum A."/>
            <person name="Ivanova N."/>
            <person name="Pati A."/>
            <person name="d'Haeseleer P."/>
            <person name="Woyke T."/>
            <person name="Kyrpides N.C."/>
        </authorList>
    </citation>
    <scope>NUCLEOTIDE SEQUENCE [LARGE SCALE GENOMIC DNA]</scope>
    <source>
        <strain>HL-EbGR7</strain>
    </source>
</reference>